<protein>
    <recommendedName>
        <fullName evidence="7">DELTA-actitoxin-Ucs1a</fullName>
        <shortName evidence="7">DELTA-AITX-Ucs1a</shortName>
    </recommendedName>
    <alternativeName>
        <fullName evidence="8">Cytolysin urticinatoxin</fullName>
        <shortName evidence="7">UcI</shortName>
    </alternativeName>
</protein>
<evidence type="ECO:0000250" key="1"/>
<evidence type="ECO:0000250" key="2">
    <source>
        <dbReference type="UniProtKB" id="B9W5G6"/>
    </source>
</evidence>
<evidence type="ECO:0000250" key="3">
    <source>
        <dbReference type="UniProtKB" id="P07845"/>
    </source>
</evidence>
<evidence type="ECO:0000250" key="4">
    <source>
        <dbReference type="UniProtKB" id="P61914"/>
    </source>
</evidence>
<evidence type="ECO:0000250" key="5">
    <source>
        <dbReference type="UniProtKB" id="Q86FQ0"/>
    </source>
</evidence>
<evidence type="ECO:0000255" key="6"/>
<evidence type="ECO:0000303" key="7">
    <source>
    </source>
</evidence>
<evidence type="ECO:0000303" key="8">
    <source ref="1"/>
</evidence>
<evidence type="ECO:0000305" key="9"/>
<dbReference type="EMBL" id="GQ848199">
    <property type="protein sequence ID" value="ACV95641.1"/>
    <property type="molecule type" value="mRNA"/>
</dbReference>
<dbReference type="SMR" id="C9EIC7"/>
<dbReference type="GO" id="GO:0005576">
    <property type="term" value="C:extracellular region"/>
    <property type="evidence" value="ECO:0007669"/>
    <property type="project" value="UniProtKB-SubCell"/>
</dbReference>
<dbReference type="GO" id="GO:0042151">
    <property type="term" value="C:nematocyst"/>
    <property type="evidence" value="ECO:0007669"/>
    <property type="project" value="UniProtKB-SubCell"/>
</dbReference>
<dbReference type="GO" id="GO:0044218">
    <property type="term" value="C:other organism cell membrane"/>
    <property type="evidence" value="ECO:0007669"/>
    <property type="project" value="UniProtKB-KW"/>
</dbReference>
<dbReference type="GO" id="GO:0046930">
    <property type="term" value="C:pore complex"/>
    <property type="evidence" value="ECO:0007669"/>
    <property type="project" value="InterPro"/>
</dbReference>
<dbReference type="GO" id="GO:0015267">
    <property type="term" value="F:channel activity"/>
    <property type="evidence" value="ECO:0007669"/>
    <property type="project" value="InterPro"/>
</dbReference>
<dbReference type="GO" id="GO:0090729">
    <property type="term" value="F:toxin activity"/>
    <property type="evidence" value="ECO:0007669"/>
    <property type="project" value="UniProtKB-KW"/>
</dbReference>
<dbReference type="GO" id="GO:0051715">
    <property type="term" value="P:cytolysis in another organism"/>
    <property type="evidence" value="ECO:0007669"/>
    <property type="project" value="InterPro"/>
</dbReference>
<dbReference type="GO" id="GO:0006812">
    <property type="term" value="P:monoatomic cation transport"/>
    <property type="evidence" value="ECO:0007669"/>
    <property type="project" value="InterPro"/>
</dbReference>
<dbReference type="GO" id="GO:0046931">
    <property type="term" value="P:pore complex assembly"/>
    <property type="evidence" value="ECO:0007669"/>
    <property type="project" value="InterPro"/>
</dbReference>
<dbReference type="FunFam" id="2.60.270.20:FF:000001">
    <property type="entry name" value="DELTA-actitoxin-Afr1a"/>
    <property type="match status" value="1"/>
</dbReference>
<dbReference type="Gene3D" id="2.60.270.20">
    <property type="entry name" value="Cytolysin/lectin"/>
    <property type="match status" value="1"/>
</dbReference>
<dbReference type="InterPro" id="IPR050677">
    <property type="entry name" value="Actinoporin_PFT"/>
</dbReference>
<dbReference type="InterPro" id="IPR009104">
    <property type="entry name" value="Anemon_actinoporin-like"/>
</dbReference>
<dbReference type="InterPro" id="IPR015926">
    <property type="entry name" value="Cytolysin/lectin"/>
</dbReference>
<dbReference type="PANTHER" id="PTHR40388">
    <property type="entry name" value="BRYOPORIN"/>
    <property type="match status" value="1"/>
</dbReference>
<dbReference type="PANTHER" id="PTHR40388:SF1">
    <property type="entry name" value="BRYOPORIN"/>
    <property type="match status" value="1"/>
</dbReference>
<dbReference type="Pfam" id="PF06369">
    <property type="entry name" value="Anemone_cytotox"/>
    <property type="match status" value="1"/>
</dbReference>
<dbReference type="SUPFAM" id="SSF63724">
    <property type="entry name" value="Cytolysin/lectin"/>
    <property type="match status" value="1"/>
</dbReference>
<comment type="function">
    <text evidence="5">Pore-forming protein that forms cations-selective hydrophilic pores of around 1 nm and causes cytolysis. Pore formation is a multi-step process that involves specific recognition of membrane sphingomyelin (but neither cholesterol nor phosphatidylcholine) using aromatic rich region and adjacent phosphocholine (POC) binding site, firm binding to the membrane (mainly driven by hydrophobic interactions) accompanied by the transfer of the N-terminal region to the lipid-water interface and finally pore formation after oligomerization of monomers.</text>
</comment>
<comment type="subunit">
    <text evidence="2">Octamer or nonamer in membranes. Monomer in the soluble state.</text>
</comment>
<comment type="subcellular location">
    <subcellularLocation>
        <location evidence="2">Secreted</location>
    </subcellularLocation>
    <subcellularLocation>
        <location evidence="3">Nematocyst</location>
    </subcellularLocation>
    <subcellularLocation>
        <location evidence="2">Target cell membrane</location>
    </subcellularLocation>
    <text evidence="2">Forms an alpha-helical membrane channel in the prey.</text>
</comment>
<comment type="domain">
    <text evidence="4">Composed of a long N-terminal alpha-helix and a core region rich in beta-sheet structures. Before the pore formation, the alpha-helix binds the lipid membrane, partitions into the lipid-water interface and stabilizes the monomeric molecule on the membrane. Finally, it traverses the bilayer, thus forming the transmembrane pore.</text>
</comment>
<comment type="similarity">
    <text evidence="9">Belongs to the actinoporin family. Sea anemone subfamily.</text>
</comment>
<keyword id="KW-0165">Cleavage on pair of basic residues</keyword>
<keyword id="KW-0204">Cytolysis</keyword>
<keyword id="KW-0406">Ion transport</keyword>
<keyword id="KW-0472">Membrane</keyword>
<keyword id="KW-0166">Nematocyst</keyword>
<keyword id="KW-0964">Secreted</keyword>
<keyword id="KW-0732">Signal</keyword>
<keyword id="KW-1052">Target cell membrane</keyword>
<keyword id="KW-1053">Target membrane</keyword>
<keyword id="KW-0800">Toxin</keyword>
<keyword id="KW-0812">Transmembrane</keyword>
<keyword id="KW-0813">Transport</keyword>
<organism>
    <name type="scientific">Urticina crassicornis</name>
    <name type="common">Mottled anemone</name>
    <name type="synonym">Tealia crassicornis</name>
    <dbReference type="NCBI Taxonomy" id="45621"/>
    <lineage>
        <taxon>Eukaryota</taxon>
        <taxon>Metazoa</taxon>
        <taxon>Cnidaria</taxon>
        <taxon>Anthozoa</taxon>
        <taxon>Hexacorallia</taxon>
        <taxon>Actiniaria</taxon>
        <taxon>Actiniidae</taxon>
        <taxon>Urticina</taxon>
    </lineage>
</organism>
<proteinExistence type="evidence at transcript level"/>
<name>ACTP1_URTCR</name>
<accession>C9EIC7</accession>
<sequence length="221" mass="24381">MNRLIVLCLFVAMIYATIALPKKEDISNDERSISVSKVPVKKSVAIAGAVIEGAKLTFGILEKILTVLGDINRKIAIGVDNESGREWTAQNAYFFSGTSDVVLPASVPNTKAFLYNAQKDRGPVATGVVGVLAYSLSNGNTLGILFSVPYDYNLYSNWWNIKLYKGIKRADRDMYNDLYYYAHPHKGDNGWHENSLGFGLKSKGFMTSSGQTILQIRVSRA</sequence>
<feature type="signal peptide" evidence="6">
    <location>
        <begin position="1"/>
        <end position="19"/>
    </location>
</feature>
<feature type="propeptide" id="PRO_0000395607" evidence="1">
    <location>
        <begin position="20"/>
        <end position="42"/>
    </location>
</feature>
<feature type="chain" id="PRO_0000395608" description="DELTA-actitoxin-Ucs1a">
    <location>
        <begin position="43"/>
        <end position="221"/>
    </location>
</feature>
<feature type="region of interest" description="Plays an important role in the hemolytic activity" evidence="3">
    <location>
        <begin position="45"/>
        <end position="54"/>
    </location>
</feature>
<feature type="region of interest" description="N-terminal region" evidence="4">
    <location>
        <begin position="53"/>
        <end position="72"/>
    </location>
</feature>
<feature type="region of interest" description="Trp-rich region, which is important for the binding to lipid membrane" evidence="4">
    <location>
        <begin position="147"/>
        <end position="162"/>
    </location>
</feature>
<feature type="short sequence motif" description="Cell attachment site, crucial for protein stability" evidence="3 6">
    <location>
        <begin position="186"/>
        <end position="188"/>
    </location>
</feature>
<feature type="binding site" evidence="3">
    <location>
        <position position="96"/>
    </location>
    <ligand>
        <name>phosphocholine</name>
        <dbReference type="ChEBI" id="CHEBI:295975"/>
    </ligand>
</feature>
<feature type="binding site" evidence="3">
    <location>
        <position position="129"/>
    </location>
    <ligand>
        <name>phosphocholine</name>
        <dbReference type="ChEBI" id="CHEBI:295975"/>
    </ligand>
</feature>
<feature type="binding site" evidence="3">
    <location>
        <position position="147"/>
    </location>
    <ligand>
        <name>phosphocholine</name>
        <dbReference type="ChEBI" id="CHEBI:295975"/>
    </ligand>
</feature>
<feature type="binding site" evidence="3">
    <location>
        <position position="149"/>
    </location>
    <ligand>
        <name>phosphocholine</name>
        <dbReference type="ChEBI" id="CHEBI:295975"/>
    </ligand>
</feature>
<feature type="binding site" evidence="3">
    <location>
        <position position="175"/>
    </location>
    <ligand>
        <name>phosphocholine</name>
        <dbReference type="ChEBI" id="CHEBI:295975"/>
    </ligand>
</feature>
<feature type="binding site" evidence="3">
    <location>
        <position position="179"/>
    </location>
    <ligand>
        <name>phosphocholine</name>
        <dbReference type="ChEBI" id="CHEBI:295975"/>
    </ligand>
</feature>
<feature type="binding site" evidence="3">
    <location>
        <position position="180"/>
    </location>
    <ligand>
        <name>phosphocholine</name>
        <dbReference type="ChEBI" id="CHEBI:295975"/>
    </ligand>
</feature>
<feature type="site" description="Important in the initial contact with the lipid membrane" evidence="4">
    <location>
        <position position="155"/>
    </location>
</feature>
<feature type="site" description="Interacts with the lipid membrane" evidence="4">
    <location>
        <position position="202"/>
    </location>
</feature>
<reference key="1">
    <citation type="submission" date="2009-08" db="EMBL/GenBank/DDBJ databases">
        <title>Cloning and characterization of an actinoporin-type toxin from the sea anemone Urticina crassicornis.</title>
        <authorList>
            <person name="Razpotnik A."/>
            <person name="Macek P."/>
            <person name="Turk T."/>
        </authorList>
    </citation>
    <scope>NUCLEOTIDE SEQUENCE [MRNA]</scope>
</reference>
<reference key="2">
    <citation type="journal article" date="2009" name="Toxicon">
        <title>Molecular mechanism of pore formation by actinoporins.</title>
        <authorList>
            <person name="Kristan K.C."/>
            <person name="Viero G."/>
            <person name="Dalla Serra M."/>
            <person name="Macek P."/>
            <person name="Anderluh G."/>
        </authorList>
    </citation>
    <scope>REVIEW</scope>
</reference>
<reference key="3">
    <citation type="journal article" date="2012" name="Toxicon">
        <title>Development of a rational nomenclature for naming peptide and protein toxins from sea anemones.</title>
        <authorList>
            <person name="Oliveira J.S."/>
            <person name="Fuentes-Silva D."/>
            <person name="King G.F."/>
        </authorList>
    </citation>
    <scope>NOMENCLATURE</scope>
</reference>